<gene>
    <name type="primary">MT-CO1</name>
    <name type="synonym">COI</name>
    <name type="synonym">COXI</name>
    <name type="synonym">MTCO1</name>
</gene>
<accession>O21399</accession>
<accession>O03549</accession>
<feature type="chain" id="PRO_0000183422" description="Cytochrome c oxidase subunit 1">
    <location>
        <begin position="1"/>
        <end position="516"/>
    </location>
</feature>
<feature type="topological domain" description="Mitochondrial matrix" evidence="2">
    <location>
        <begin position="1"/>
        <end position="12"/>
    </location>
</feature>
<feature type="transmembrane region" description="Helical; Name=I" evidence="2">
    <location>
        <begin position="13"/>
        <end position="41"/>
    </location>
</feature>
<feature type="topological domain" description="Mitochondrial intermembrane" evidence="2">
    <location>
        <begin position="42"/>
        <end position="51"/>
    </location>
</feature>
<feature type="transmembrane region" description="Helical; Name=II" evidence="2">
    <location>
        <begin position="52"/>
        <end position="87"/>
    </location>
</feature>
<feature type="topological domain" description="Mitochondrial matrix" evidence="2">
    <location>
        <begin position="88"/>
        <end position="95"/>
    </location>
</feature>
<feature type="transmembrane region" description="Helical; Name=III" evidence="2">
    <location>
        <begin position="96"/>
        <end position="118"/>
    </location>
</feature>
<feature type="topological domain" description="Mitochondrial intermembrane" evidence="2">
    <location>
        <begin position="119"/>
        <end position="141"/>
    </location>
</feature>
<feature type="transmembrane region" description="Helical; Name=IV" evidence="2">
    <location>
        <begin position="142"/>
        <end position="171"/>
    </location>
</feature>
<feature type="topological domain" description="Mitochondrial matrix" evidence="2">
    <location>
        <begin position="172"/>
        <end position="183"/>
    </location>
</feature>
<feature type="transmembrane region" description="Helical; Name=V" evidence="2">
    <location>
        <begin position="184"/>
        <end position="213"/>
    </location>
</feature>
<feature type="topological domain" description="Mitochondrial intermembrane" evidence="2">
    <location>
        <begin position="214"/>
        <end position="228"/>
    </location>
</feature>
<feature type="transmembrane region" description="Helical; Name=VI" evidence="2">
    <location>
        <begin position="229"/>
        <end position="262"/>
    </location>
</feature>
<feature type="topological domain" description="Mitochondrial matrix" evidence="2">
    <location>
        <begin position="263"/>
        <end position="270"/>
    </location>
</feature>
<feature type="transmembrane region" description="Helical; Name=VII" evidence="2">
    <location>
        <begin position="271"/>
        <end position="287"/>
    </location>
</feature>
<feature type="topological domain" description="Mitochondrial intermembrane" evidence="2">
    <location>
        <begin position="288"/>
        <end position="299"/>
    </location>
</feature>
<feature type="transmembrane region" description="Helical; Name=VIII" evidence="2">
    <location>
        <begin position="300"/>
        <end position="328"/>
    </location>
</feature>
<feature type="topological domain" description="Mitochondrial matrix" evidence="2">
    <location>
        <begin position="329"/>
        <end position="336"/>
    </location>
</feature>
<feature type="transmembrane region" description="Helical; Name=IX" evidence="2">
    <location>
        <begin position="337"/>
        <end position="358"/>
    </location>
</feature>
<feature type="topological domain" description="Mitochondrial intermembrane" evidence="2">
    <location>
        <begin position="359"/>
        <end position="371"/>
    </location>
</feature>
<feature type="transmembrane region" description="Helical; Name=X" evidence="2">
    <location>
        <begin position="372"/>
        <end position="401"/>
    </location>
</feature>
<feature type="topological domain" description="Mitochondrial matrix" evidence="2">
    <location>
        <begin position="402"/>
        <end position="407"/>
    </location>
</feature>
<feature type="transmembrane region" description="Helical; Name=XI" evidence="2">
    <location>
        <begin position="408"/>
        <end position="434"/>
    </location>
</feature>
<feature type="topological domain" description="Mitochondrial intermembrane" evidence="2">
    <location>
        <begin position="435"/>
        <end position="447"/>
    </location>
</feature>
<feature type="transmembrane region" description="Helical; Name=XII" evidence="2">
    <location>
        <begin position="448"/>
        <end position="479"/>
    </location>
</feature>
<feature type="topological domain" description="Mitochondrial matrix" evidence="2">
    <location>
        <begin position="480"/>
        <end position="516"/>
    </location>
</feature>
<feature type="binding site" evidence="2">
    <location>
        <position position="41"/>
    </location>
    <ligand>
        <name>Na(+)</name>
        <dbReference type="ChEBI" id="CHEBI:29101"/>
    </ligand>
</feature>
<feature type="binding site" evidence="2">
    <location>
        <position position="46"/>
    </location>
    <ligand>
        <name>Na(+)</name>
        <dbReference type="ChEBI" id="CHEBI:29101"/>
    </ligand>
</feature>
<feature type="binding site" description="axial binding residue" evidence="2">
    <location>
        <position position="62"/>
    </location>
    <ligand>
        <name>Fe(II)-heme a</name>
        <dbReference type="ChEBI" id="CHEBI:61715"/>
        <note>low-spin</note>
    </ligand>
    <ligandPart>
        <name>Fe</name>
        <dbReference type="ChEBI" id="CHEBI:18248"/>
    </ligandPart>
</feature>
<feature type="binding site" evidence="2">
    <location>
        <position position="241"/>
    </location>
    <ligand>
        <name>Cu cation</name>
        <dbReference type="ChEBI" id="CHEBI:23378"/>
        <label>B</label>
    </ligand>
</feature>
<feature type="binding site" evidence="2">
    <location>
        <position position="245"/>
    </location>
    <ligand>
        <name>O2</name>
        <dbReference type="ChEBI" id="CHEBI:15379"/>
    </ligand>
</feature>
<feature type="binding site" evidence="2">
    <location>
        <position position="291"/>
    </location>
    <ligand>
        <name>Cu cation</name>
        <dbReference type="ChEBI" id="CHEBI:23378"/>
        <label>B</label>
    </ligand>
</feature>
<feature type="binding site" evidence="2">
    <location>
        <position position="292"/>
    </location>
    <ligand>
        <name>Cu cation</name>
        <dbReference type="ChEBI" id="CHEBI:23378"/>
        <label>B</label>
    </ligand>
</feature>
<feature type="binding site" evidence="2">
    <location>
        <position position="369"/>
    </location>
    <ligand>
        <name>Mg(2+)</name>
        <dbReference type="ChEBI" id="CHEBI:18420"/>
        <note>ligand shared with MT-CO2</note>
    </ligand>
</feature>
<feature type="binding site" evidence="2">
    <location>
        <position position="370"/>
    </location>
    <ligand>
        <name>Mg(2+)</name>
        <dbReference type="ChEBI" id="CHEBI:18420"/>
        <note>ligand shared with MT-CO2</note>
    </ligand>
</feature>
<feature type="binding site" description="axial binding residue" evidence="2">
    <location>
        <position position="377"/>
    </location>
    <ligand>
        <name>heme a3</name>
        <dbReference type="ChEBI" id="CHEBI:83282"/>
        <note>high-spin</note>
    </ligand>
    <ligandPart>
        <name>Fe</name>
        <dbReference type="ChEBI" id="CHEBI:18248"/>
    </ligandPart>
</feature>
<feature type="binding site" description="axial binding residue" evidence="2">
    <location>
        <position position="379"/>
    </location>
    <ligand>
        <name>Fe(II)-heme a</name>
        <dbReference type="ChEBI" id="CHEBI:61715"/>
        <note>low-spin</note>
    </ligand>
    <ligandPart>
        <name>Fe</name>
        <dbReference type="ChEBI" id="CHEBI:18248"/>
    </ligandPart>
</feature>
<feature type="binding site" evidence="2">
    <location>
        <position position="442"/>
    </location>
    <ligand>
        <name>Na(+)</name>
        <dbReference type="ChEBI" id="CHEBI:29101"/>
    </ligand>
</feature>
<feature type="cross-link" description="1'-histidyl-3'-tyrosine (His-Tyr)" evidence="2">
    <location>
        <begin position="241"/>
        <end position="245"/>
    </location>
</feature>
<reference key="1">
    <citation type="journal article" date="1997" name="Mol. Biol. Evol.">
        <title>The mtDNA sequence of the ostrich and the divergence between paleognathous and neognathous birds.</title>
        <authorList>
            <person name="Harlid A."/>
            <person name="Janke A."/>
            <person name="Arnason U."/>
        </authorList>
    </citation>
    <scope>NUCLEOTIDE SEQUENCE [GENOMIC DNA]</scope>
</reference>
<reference key="2">
    <citation type="submission" date="1998-09" db="EMBL/GenBank/DDBJ databases">
        <authorList>
            <person name="Harlid A."/>
        </authorList>
    </citation>
    <scope>SEQUENCE REVISION</scope>
</reference>
<reference key="3">
    <citation type="submission" date="1998-06" db="EMBL/GenBank/DDBJ databases">
        <title>Primers for a PCR-based approach to complete mitochondrial genome sequencing.</title>
        <authorList>
            <person name="Sorenson M.D."/>
            <person name="Dimcheff D.E."/>
            <person name="Ast J.C."/>
            <person name="Yuri T."/>
            <person name="Mindell D.P."/>
        </authorList>
    </citation>
    <scope>NUCLEOTIDE SEQUENCE [GENOMIC DNA]</scope>
</reference>
<reference key="4">
    <citation type="journal article" date="2001" name="Proc. R. Soc. B">
        <title>Complete mitochondrial DNA genome sequences of extinct birds: ratite phylogenetics and the vicariance biogeography hypothesis.</title>
        <authorList>
            <person name="Haddrath O."/>
            <person name="Baker A.J."/>
        </authorList>
    </citation>
    <scope>NUCLEOTIDE SEQUENCE [GENOMIC DNA]</scope>
</reference>
<reference key="5">
    <citation type="book" date="1997" name="Avian molecular evolution and systematics">
        <title>Phylogenetic relationships of the ratite birds: resolving conflicts between molecular and morphological data sets.</title>
        <editorList>
            <person name="Mindell D.P."/>
        </editorList>
        <authorList>
            <person name="Lee K."/>
            <person name="Feinstein J."/>
            <person name="Cracraft J."/>
        </authorList>
    </citation>
    <scope>NUCLEOTIDE SEQUENCE [GENOMIC DNA] OF 1-337</scope>
</reference>
<name>COX1_STRCA</name>
<comment type="function">
    <text evidence="3">Component of the cytochrome c oxidase, the last enzyme in the mitochondrial electron transport chain which drives oxidative phosphorylation. The respiratory chain contains 3 multisubunit complexes succinate dehydrogenase (complex II, CII), ubiquinol-cytochrome c oxidoreductase (cytochrome b-c1 complex, complex III, CIII) and cytochrome c oxidase (complex IV, CIV), that cooperate to transfer electrons derived from NADH and succinate to molecular oxygen, creating an electrochemical gradient over the inner membrane that drives transmembrane transport and the ATP synthase. Cytochrome c oxidase is the component of the respiratory chain that catalyzes the reduction of oxygen to water. Electrons originating from reduced cytochrome c in the intermembrane space (IMS) are transferred via the dinuclear copper A center (CU(A)) of subunit 2 and heme A of subunit 1 to the active site in subunit 1, a binuclear center (BNC) formed by heme A3 and copper B (CU(B)). The BNC reduces molecular oxygen to 2 water molecules using 4 electrons from cytochrome c in the IMS and 4 protons from the mitochondrial matrix.</text>
</comment>
<comment type="catalytic activity">
    <reaction evidence="3">
        <text>4 Fe(II)-[cytochrome c] + O2 + 8 H(+)(in) = 4 Fe(III)-[cytochrome c] + 2 H2O + 4 H(+)(out)</text>
        <dbReference type="Rhea" id="RHEA:11436"/>
        <dbReference type="Rhea" id="RHEA-COMP:10350"/>
        <dbReference type="Rhea" id="RHEA-COMP:14399"/>
        <dbReference type="ChEBI" id="CHEBI:15377"/>
        <dbReference type="ChEBI" id="CHEBI:15378"/>
        <dbReference type="ChEBI" id="CHEBI:15379"/>
        <dbReference type="ChEBI" id="CHEBI:29033"/>
        <dbReference type="ChEBI" id="CHEBI:29034"/>
        <dbReference type="EC" id="7.1.1.9"/>
    </reaction>
    <physiologicalReaction direction="left-to-right" evidence="3">
        <dbReference type="Rhea" id="RHEA:11437"/>
    </physiologicalReaction>
</comment>
<comment type="cofactor">
    <cofactor evidence="2">
        <name>heme</name>
        <dbReference type="ChEBI" id="CHEBI:30413"/>
    </cofactor>
    <text evidence="2">Binds 2 heme A groups non-covalently per subunit.</text>
</comment>
<comment type="cofactor">
    <cofactor evidence="2">
        <name>Cu cation</name>
        <dbReference type="ChEBI" id="CHEBI:23378"/>
    </cofactor>
    <text evidence="2">Binds a copper B center.</text>
</comment>
<comment type="pathway">
    <text evidence="3">Energy metabolism; oxidative phosphorylation.</text>
</comment>
<comment type="subunit">
    <text evidence="1 2">Component of the cytochrome c oxidase (complex IV, CIV), a multisubunit enzyme composed of 14 subunits. The complex is composed of a catalytic core of 3 subunits MT-CO1, MT-CO2 and MT-CO3, encoded in the mitochondrial DNA, and 11 supernumerary subunits COX4I, COX5A, COX5B, COX6A, COX6B, COX6C, COX7A, COX7B, COX7C, COX8 and NDUFA4, which are encoded in the nuclear genome. The complex exists as a monomer or a dimer and forms supercomplexes (SCs) in the inner mitochondrial membrane with NADH-ubiquinone oxidoreductase (complex I, CI) and ubiquinol-cytochrome c oxidoreductase (cytochrome b-c1 complex, complex III, CIII), resulting in different assemblies (supercomplex SCI(1)III(2)IV(1) and megacomplex MCI(2)III(2)IV(2)) (By similarity). As a newly synthesized protein, rapidly incorporates into a multi-subunit assembly intermediate in the inner membrane, called MITRAC (mitochondrial translation regulation assembly intermediate of cytochrome c oxidase) complex, whose core components are COA3/MITRAC12 and COX14. Within the MITRAC complex, interacts with COA3 and with SMIM20/MITRAC7; the interaction with SMIM20 stabilizes the newly synthesized MT-CO1 and prevents its premature turnover. Interacts with TMEM177 in a COX20-dependent manner (By similarity).</text>
</comment>
<comment type="subcellular location">
    <subcellularLocation>
        <location evidence="2">Mitochondrion inner membrane</location>
        <topology evidence="2">Multi-pass membrane protein</topology>
    </subcellularLocation>
</comment>
<comment type="similarity">
    <text evidence="4">Belongs to the heme-copper respiratory oxidase family.</text>
</comment>
<geneLocation type="mitochondrion"/>
<sequence>MTFITRWLFSTNHKDIGTLYLIFGAWAGMVGTALSLLIRAELGQPGTLLGDDQIYNVIVTAHAFVMIFFMVMPVMIGGFGNWLVPLMIGAPDMAFPRMNNMSFWLLPPSFLLLLASSTVEAGAGTGWTVYPPLAGNLAHAGASVDLAIFSLHLAGVSSILGAINFITTAINMKPPALSQYQTPLFVWSVLITAILLLLSLPVLAAGITMLLTDRNLNTTFFDPAGGGDPVLYQHLFWFFGHPEVYILILPGFGIISHVVTYYAGKKEPFGYMGMVWAMLSIGFLGFIVWAHHMFTVGMDVDTRAYFTSATMIIAIPTGIKVFSWLATLHGGTIKWDPPILWALGFIFLFTIGGLTGIVLANSSLDIALHDTYYVVAHFHYVLSMGAVFAILAGFTHWFPLFTGYTLHPTWAKAHFGVMFTGVNLTFFPQHFLGLAGMPRRYSDYPDAYTLWNTMSSIGSLISMTAVIMLMFIIWEAFSSKRKVLQPELIATNIEWIHGCPPPHHTFEEPAFVQVQE</sequence>
<organism>
    <name type="scientific">Struthio camelus</name>
    <name type="common">Common ostrich</name>
    <dbReference type="NCBI Taxonomy" id="8801"/>
    <lineage>
        <taxon>Eukaryota</taxon>
        <taxon>Metazoa</taxon>
        <taxon>Chordata</taxon>
        <taxon>Craniata</taxon>
        <taxon>Vertebrata</taxon>
        <taxon>Euteleostomi</taxon>
        <taxon>Archelosauria</taxon>
        <taxon>Archosauria</taxon>
        <taxon>Dinosauria</taxon>
        <taxon>Saurischia</taxon>
        <taxon>Theropoda</taxon>
        <taxon>Coelurosauria</taxon>
        <taxon>Aves</taxon>
        <taxon>Palaeognathae</taxon>
        <taxon>Struthioniformes</taxon>
        <taxon>Struthionidae</taxon>
        <taxon>Struthio</taxon>
    </lineage>
</organism>
<dbReference type="EC" id="7.1.1.9"/>
<dbReference type="EMBL" id="Y12025">
    <property type="protein sequence ID" value="CAA72746.1"/>
    <property type="molecule type" value="Genomic_DNA"/>
</dbReference>
<dbReference type="EMBL" id="AF069429">
    <property type="protein sequence ID" value="AAD09385.1"/>
    <property type="molecule type" value="Genomic_DNA"/>
</dbReference>
<dbReference type="EMBL" id="AF338715">
    <property type="protein sequence ID" value="AAK53347.1"/>
    <property type="molecule type" value="Genomic_DNA"/>
</dbReference>
<dbReference type="EMBL" id="U76062">
    <property type="protein sequence ID" value="AAB61328.1"/>
    <property type="molecule type" value="Genomic_DNA"/>
</dbReference>
<dbReference type="PIR" id="C90612">
    <property type="entry name" value="C90612"/>
</dbReference>
<dbReference type="PIR" id="T12411">
    <property type="entry name" value="T12411"/>
</dbReference>
<dbReference type="SMR" id="O21399"/>
<dbReference type="CTD" id="4512"/>
<dbReference type="UniPathway" id="UPA00705"/>
<dbReference type="GO" id="GO:0005743">
    <property type="term" value="C:mitochondrial inner membrane"/>
    <property type="evidence" value="ECO:0007669"/>
    <property type="project" value="UniProtKB-SubCell"/>
</dbReference>
<dbReference type="GO" id="GO:0045277">
    <property type="term" value="C:respiratory chain complex IV"/>
    <property type="evidence" value="ECO:0000250"/>
    <property type="project" value="UniProtKB"/>
</dbReference>
<dbReference type="GO" id="GO:0004129">
    <property type="term" value="F:cytochrome-c oxidase activity"/>
    <property type="evidence" value="ECO:0007669"/>
    <property type="project" value="UniProtKB-EC"/>
</dbReference>
<dbReference type="GO" id="GO:0020037">
    <property type="term" value="F:heme binding"/>
    <property type="evidence" value="ECO:0007669"/>
    <property type="project" value="InterPro"/>
</dbReference>
<dbReference type="GO" id="GO:0046872">
    <property type="term" value="F:metal ion binding"/>
    <property type="evidence" value="ECO:0007669"/>
    <property type="project" value="UniProtKB-KW"/>
</dbReference>
<dbReference type="GO" id="GO:0015990">
    <property type="term" value="P:electron transport coupled proton transport"/>
    <property type="evidence" value="ECO:0007669"/>
    <property type="project" value="TreeGrafter"/>
</dbReference>
<dbReference type="GO" id="GO:0006123">
    <property type="term" value="P:mitochondrial electron transport, cytochrome c to oxygen"/>
    <property type="evidence" value="ECO:0007669"/>
    <property type="project" value="TreeGrafter"/>
</dbReference>
<dbReference type="CDD" id="cd01663">
    <property type="entry name" value="Cyt_c_Oxidase_I"/>
    <property type="match status" value="1"/>
</dbReference>
<dbReference type="FunFam" id="1.20.210.10:FF:000001">
    <property type="entry name" value="Cytochrome c oxidase subunit 1"/>
    <property type="match status" value="1"/>
</dbReference>
<dbReference type="Gene3D" id="1.20.210.10">
    <property type="entry name" value="Cytochrome c oxidase-like, subunit I domain"/>
    <property type="match status" value="1"/>
</dbReference>
<dbReference type="InterPro" id="IPR023616">
    <property type="entry name" value="Cyt_c_oxase-like_su1_dom"/>
</dbReference>
<dbReference type="InterPro" id="IPR036927">
    <property type="entry name" value="Cyt_c_oxase-like_su1_sf"/>
</dbReference>
<dbReference type="InterPro" id="IPR000883">
    <property type="entry name" value="Cyt_C_Oxase_1"/>
</dbReference>
<dbReference type="InterPro" id="IPR023615">
    <property type="entry name" value="Cyt_c_Oxase_su1_BS"/>
</dbReference>
<dbReference type="InterPro" id="IPR033944">
    <property type="entry name" value="Cyt_c_oxase_su1_dom"/>
</dbReference>
<dbReference type="PANTHER" id="PTHR10422">
    <property type="entry name" value="CYTOCHROME C OXIDASE SUBUNIT 1"/>
    <property type="match status" value="1"/>
</dbReference>
<dbReference type="PANTHER" id="PTHR10422:SF18">
    <property type="entry name" value="CYTOCHROME C OXIDASE SUBUNIT 1"/>
    <property type="match status" value="1"/>
</dbReference>
<dbReference type="Pfam" id="PF00115">
    <property type="entry name" value="COX1"/>
    <property type="match status" value="1"/>
</dbReference>
<dbReference type="PRINTS" id="PR01165">
    <property type="entry name" value="CYCOXIDASEI"/>
</dbReference>
<dbReference type="SUPFAM" id="SSF81442">
    <property type="entry name" value="Cytochrome c oxidase subunit I-like"/>
    <property type="match status" value="1"/>
</dbReference>
<dbReference type="PROSITE" id="PS50855">
    <property type="entry name" value="COX1"/>
    <property type="match status" value="1"/>
</dbReference>
<dbReference type="PROSITE" id="PS00077">
    <property type="entry name" value="COX1_CUB"/>
    <property type="match status" value="1"/>
</dbReference>
<proteinExistence type="inferred from homology"/>
<evidence type="ECO:0000250" key="1">
    <source>
        <dbReference type="UniProtKB" id="P00395"/>
    </source>
</evidence>
<evidence type="ECO:0000250" key="2">
    <source>
        <dbReference type="UniProtKB" id="P00396"/>
    </source>
</evidence>
<evidence type="ECO:0000250" key="3">
    <source>
        <dbReference type="UniProtKB" id="P00401"/>
    </source>
</evidence>
<evidence type="ECO:0000305" key="4"/>
<protein>
    <recommendedName>
        <fullName>Cytochrome c oxidase subunit 1</fullName>
        <ecNumber>7.1.1.9</ecNumber>
    </recommendedName>
    <alternativeName>
        <fullName>Cytochrome c oxidase polypeptide I</fullName>
    </alternativeName>
</protein>
<keyword id="KW-0106">Calcium</keyword>
<keyword id="KW-0186">Copper</keyword>
<keyword id="KW-0249">Electron transport</keyword>
<keyword id="KW-0349">Heme</keyword>
<keyword id="KW-0408">Iron</keyword>
<keyword id="KW-0460">Magnesium</keyword>
<keyword id="KW-0472">Membrane</keyword>
<keyword id="KW-0479">Metal-binding</keyword>
<keyword id="KW-0496">Mitochondrion</keyword>
<keyword id="KW-0999">Mitochondrion inner membrane</keyword>
<keyword id="KW-0679">Respiratory chain</keyword>
<keyword id="KW-0915">Sodium</keyword>
<keyword id="KW-1278">Translocase</keyword>
<keyword id="KW-0812">Transmembrane</keyword>
<keyword id="KW-1133">Transmembrane helix</keyword>
<keyword id="KW-0813">Transport</keyword>